<gene>
    <name evidence="5" type="primary">virR</name>
    <name evidence="6" type="ordered locus">Rv0431</name>
</gene>
<comment type="function">
    <text evidence="2 4">Virulence factor that regulates vesiculogenesis (PubMed:24248369). Acts by regulating the production of mycobacterial membrane vesicles (MV) bearing Toll-like receptor 2 (TLR2) ligands, including the lipoproteins LpqH, a major host TLR2 agonist, and SodC (PubMed:24248369). By restraining the release of most of the material that activates host cells through TLR2, VirR reduces the immunostimulant potential of M.tuberculosis and increases its virulence (PubMed:24248369). May contribute to cell envelope integrity (PubMed:31285241).</text>
</comment>
<comment type="function">
    <text evidence="3">When overexpressed in M.smegmatis, it modulates the production of IL-10, IL-12 p40 and TNF-alpha by RAW264.7 macrophages and it decreases the killing of M.smegmatis.</text>
</comment>
<comment type="subcellular location">
    <subcellularLocation>
        <location evidence="2">Cell inner membrane</location>
        <topology evidence="2">Peripheral membrane protein</topology>
        <orientation evidence="2">Cytoplasmic side</orientation>
    </subcellularLocation>
    <subcellularLocation>
        <location evidence="4">Cytoplasm</location>
    </subcellularLocation>
    <text evidence="2">Subcellular fractionation and topologic analyses suggest that VirR is located in the cytosol, where it is associated with the plasma membrane without crossing it.</text>
</comment>
<comment type="PTM">
    <text evidence="3">Could be O-mannosylated (PubMed:27765619). Is likely mannosylated on Thr-61 when overexpressed in M.smegmatis (PubMed:27765619).</text>
</comment>
<comment type="disruption phenotype">
    <text evidence="1 2 4">Loss of the gene results in lower growth rates at low densities in rich media (PubMed:31285241). In contrast, Beaulieu et al. show that the mutant grows normally in vitro but is markedly attenuated in the lungs of infected animals (PubMed:21170273). It is attenuated and hyperinflammatory in primary human macrophages (PubMed:24248369). Disruption of the gene causes altered immune responses in macrophages (PubMed:21170273). Infection with the mutant leads to markedly increased release of TNF-alpha, IL-12 p40 and IL-6 from primary mouse macrophages (PubMed:21170273). The mutant has normal overall cell-wall integrity, and disruption of the gene does not lead to an overall increase in the amount of protein released by M.tuberculosis (PubMed:24248369). However, the VirR-deficient mutant releases a greater quantity of immunostimulatory factors (PubMed:24248369). Membrane vesicles (MV) derived from the mutant are enriched in LpqH and SodC and are hyperinflammatory in primary mouse bone marrow-derived macrophages (BMM) (PubMed:24248369). The mutant has substantially increased sensitivity to two distinct antibiotics that inhibit peptidoglycan cross-linking (vancomycin and meropenem) and to rifampicin (PubMed:31285241). It also shows increased cell envelope permeability (PubMed:31285241).</text>
</comment>
<protein>
    <recommendedName>
        <fullName evidence="5">Vesiculogenesis and immune response regulator</fullName>
    </recommendedName>
</protein>
<proteinExistence type="evidence at protein level"/>
<feature type="chain" id="PRO_0000462282" description="Vesiculogenesis and immune response regulator">
    <location>
        <begin position="1"/>
        <end position="164"/>
    </location>
</feature>
<feature type="mutagenesis site" description="Purely cytosolic form, which is functional and retains immunomodulatory capacity." evidence="2">
    <location>
        <begin position="1"/>
        <end position="42"/>
    </location>
</feature>
<feature type="mutagenesis site" description="Does not affect glycosylation; when expressed in M.smegmatis." evidence="3">
    <original>T</original>
    <variation>A</variation>
    <location>
        <position position="59"/>
    </location>
</feature>
<feature type="mutagenesis site" description="Does not affect glycosylation; when expressed in M.smegmatis." evidence="3">
    <original>T</original>
    <variation>A</variation>
    <location>
        <position position="60"/>
    </location>
</feature>
<feature type="mutagenesis site" description="Affects glycosylation; when expressed in M.smegmatis." evidence="3">
    <original>T</original>
    <variation>A</variation>
    <location>
        <position position="61"/>
    </location>
</feature>
<feature type="mutagenesis site" description="Does not affect glycosylation; when expressed in M.smegmatis." evidence="3">
    <original>T</original>
    <variation>A</variation>
    <location>
        <position position="62"/>
    </location>
</feature>
<name>VIRR_MYCTU</name>
<keyword id="KW-0997">Cell inner membrane</keyword>
<keyword id="KW-1003">Cell membrane</keyword>
<keyword id="KW-0963">Cytoplasm</keyword>
<keyword id="KW-0472">Membrane</keyword>
<keyword id="KW-1185">Reference proteome</keyword>
<keyword id="KW-0843">Virulence</keyword>
<reference evidence="6" key="1">
    <citation type="journal article" date="1998" name="Nature">
        <title>Deciphering the biology of Mycobacterium tuberculosis from the complete genome sequence.</title>
        <authorList>
            <person name="Cole S.T."/>
            <person name="Brosch R."/>
            <person name="Parkhill J."/>
            <person name="Garnier T."/>
            <person name="Churcher C.M."/>
            <person name="Harris D.E."/>
            <person name="Gordon S.V."/>
            <person name="Eiglmeier K."/>
            <person name="Gas S."/>
            <person name="Barry C.E. III"/>
            <person name="Tekaia F."/>
            <person name="Badcock K."/>
            <person name="Basham D."/>
            <person name="Brown D."/>
            <person name="Chillingworth T."/>
            <person name="Connor R."/>
            <person name="Davies R.M."/>
            <person name="Devlin K."/>
            <person name="Feltwell T."/>
            <person name="Gentles S."/>
            <person name="Hamlin N."/>
            <person name="Holroyd S."/>
            <person name="Hornsby T."/>
            <person name="Jagels K."/>
            <person name="Krogh A."/>
            <person name="McLean J."/>
            <person name="Moule S."/>
            <person name="Murphy L.D."/>
            <person name="Oliver S."/>
            <person name="Osborne J."/>
            <person name="Quail M.A."/>
            <person name="Rajandream M.A."/>
            <person name="Rogers J."/>
            <person name="Rutter S."/>
            <person name="Seeger K."/>
            <person name="Skelton S."/>
            <person name="Squares S."/>
            <person name="Squares R."/>
            <person name="Sulston J.E."/>
            <person name="Taylor K."/>
            <person name="Whitehead S."/>
            <person name="Barrell B.G."/>
        </authorList>
    </citation>
    <scope>NUCLEOTIDE SEQUENCE [LARGE SCALE GENOMIC DNA]</scope>
    <source>
        <strain>ATCC 25618 / H37Rv</strain>
    </source>
</reference>
<reference key="2">
    <citation type="journal article" date="2010" name="PLoS ONE">
        <title>Genome-wide screen for Mycobacterium tuberculosis genes that regulate host immunity.</title>
        <authorList>
            <person name="Beaulieu A.M."/>
            <person name="Rath P."/>
            <person name="Imhof M."/>
            <person name="Siddall M.E."/>
            <person name="Roberts J."/>
            <person name="Schnappinger D."/>
            <person name="Nathan C.F."/>
        </authorList>
    </citation>
    <scope>DISRUPTION PHENOTYPE</scope>
    <source>
        <strain>H37Rv</strain>
    </source>
</reference>
<reference key="3">
    <citation type="journal article" date="2011" name="Mol. Cell. Proteomics">
        <title>Proteogenomic analysis of Mycobacterium tuberculosis by high resolution mass spectrometry.</title>
        <authorList>
            <person name="Kelkar D.S."/>
            <person name="Kumar D."/>
            <person name="Kumar P."/>
            <person name="Balakrishnan L."/>
            <person name="Muthusamy B."/>
            <person name="Yadav A.K."/>
            <person name="Shrivastava P."/>
            <person name="Marimuthu A."/>
            <person name="Anand S."/>
            <person name="Sundaram H."/>
            <person name="Kingsbury R."/>
            <person name="Harsha H.C."/>
            <person name="Nair B."/>
            <person name="Prasad T.S."/>
            <person name="Chauhan D.S."/>
            <person name="Katoch K."/>
            <person name="Katoch V.M."/>
            <person name="Kumar P."/>
            <person name="Chaerkady R."/>
            <person name="Ramachandran S."/>
            <person name="Dash D."/>
            <person name="Pandey A."/>
        </authorList>
    </citation>
    <scope>IDENTIFICATION BY MASS SPECTROMETRY [LARGE SCALE ANALYSIS]</scope>
    <source>
        <strain>ATCC 25618 / H37Rv</strain>
    </source>
</reference>
<reference key="4">
    <citation type="journal article" date="2013" name="Proc. Natl. Acad. Sci. U.S.A.">
        <title>Genetic regulation of vesiculogenesis and immunomodulation in Mycobacterium tuberculosis.</title>
        <authorList>
            <person name="Rath P."/>
            <person name="Huang C."/>
            <person name="Wang T."/>
            <person name="Wang T."/>
            <person name="Li H."/>
            <person name="Prados-Rosales R."/>
            <person name="Elemento O."/>
            <person name="Casadevall A."/>
            <person name="Nathan C.F."/>
        </authorList>
    </citation>
    <scope>FUNCTION</scope>
    <scope>SUBCELLULAR LOCATION</scope>
    <scope>DISRUPTION PHENOTYPE</scope>
    <scope>MUTAGENESIS OF 1-MET--GLY-42</scope>
    <source>
        <strain>H37Rv</strain>
    </source>
</reference>
<reference key="5">
    <citation type="journal article" date="2016" name="Microb. Pathog.">
        <title>Mycobacterium tuberculosis Rv0431 expressed in Mycobacterium smegmatis, a potentially mannosylated protein, mediated the immune evasion of RAW 264.7 macrophages.</title>
        <authorList>
            <person name="Deng G."/>
            <person name="Zhang F."/>
            <person name="Yang S."/>
            <person name="Kang J."/>
            <person name="Sha S."/>
            <person name="Ma Y."/>
        </authorList>
    </citation>
    <scope>FUNCTION</scope>
    <scope>OVEREXPRESSION IN M.SMEGMATIS</scope>
    <scope>GLYCOSYLATION</scope>
    <scope>MUTAGENESIS OF THR-59; THR-60; THR-61 AND THR-62</scope>
    <source>
        <strain>H37Rv</strain>
    </source>
</reference>
<reference key="6">
    <citation type="journal article" date="2019" name="J. Bacteriol.">
        <title>Mycobacterium tuberculosis Rv2700 Contributes to Cell Envelope Integrity and Virulence.</title>
        <authorList>
            <person name="Ballister E.R."/>
            <person name="Samanovic M.I."/>
            <person name="Darwin K.H."/>
        </authorList>
    </citation>
    <scope>FUNCTION</scope>
    <scope>DISRUPTION PHENOTYPE</scope>
    <source>
        <strain>H37Rv</strain>
    </source>
</reference>
<accession>P96277</accession>
<accession>F2GME8</accession>
<accession>I6WYD6</accession>
<accession>Q7D9U0</accession>
<sequence>MLVTVGSMNERVPDSSGLPLRAMVMVLLFLGVVFLLLVWQALGSSPNSEDDSSAISTMTTTTAAPTSTSVKPAAPRAEVRVYNISGTEGAAARTADRLKAAGFTVTDVGNLSLPDVAATTVYYTEVEGERATADAVGRTLGAAVELRLPELSDQPPGVIVVVTG</sequence>
<organism>
    <name type="scientific">Mycobacterium tuberculosis (strain ATCC 25618 / H37Rv)</name>
    <dbReference type="NCBI Taxonomy" id="83332"/>
    <lineage>
        <taxon>Bacteria</taxon>
        <taxon>Bacillati</taxon>
        <taxon>Actinomycetota</taxon>
        <taxon>Actinomycetes</taxon>
        <taxon>Mycobacteriales</taxon>
        <taxon>Mycobacteriaceae</taxon>
        <taxon>Mycobacterium</taxon>
        <taxon>Mycobacterium tuberculosis complex</taxon>
    </lineage>
</organism>
<dbReference type="EMBL" id="AL123456">
    <property type="protein sequence ID" value="CCP43162.1"/>
    <property type="molecule type" value="Genomic_DNA"/>
</dbReference>
<dbReference type="RefSeq" id="NP_214945.1">
    <property type="nucleotide sequence ID" value="NC_000962.3"/>
</dbReference>
<dbReference type="RefSeq" id="WP_003898448.1">
    <property type="nucleotide sequence ID" value="NC_000962.3"/>
</dbReference>
<dbReference type="SMR" id="P96277"/>
<dbReference type="STRING" id="83332.Rv0431"/>
<dbReference type="PaxDb" id="83332-Rv0431"/>
<dbReference type="GeneID" id="886362"/>
<dbReference type="KEGG" id="mtu:Rv0431"/>
<dbReference type="KEGG" id="mtv:RVBD_0431"/>
<dbReference type="PATRIC" id="fig|83332.111.peg.472"/>
<dbReference type="TubercuList" id="Rv0431"/>
<dbReference type="eggNOG" id="ENOG50330SA">
    <property type="taxonomic scope" value="Bacteria"/>
</dbReference>
<dbReference type="InParanoid" id="P96277"/>
<dbReference type="OrthoDB" id="4427486at2"/>
<dbReference type="Proteomes" id="UP000001584">
    <property type="component" value="Chromosome"/>
</dbReference>
<dbReference type="GO" id="GO:0016020">
    <property type="term" value="C:membrane"/>
    <property type="evidence" value="ECO:0007669"/>
    <property type="project" value="UniProtKB-KW"/>
</dbReference>
<dbReference type="GO" id="GO:0009274">
    <property type="term" value="C:peptidoglycan-based cell wall"/>
    <property type="evidence" value="ECO:0007005"/>
    <property type="project" value="MTBBASE"/>
</dbReference>
<dbReference type="GO" id="GO:0052167">
    <property type="term" value="P:symbiont-mediated perturbation of host innate immune response"/>
    <property type="evidence" value="ECO:0000314"/>
    <property type="project" value="MTBBASE"/>
</dbReference>
<dbReference type="FunFam" id="3.30.70.2390:FF:000003">
    <property type="entry name" value="Tuberculin related peptide"/>
    <property type="match status" value="1"/>
</dbReference>
<dbReference type="Gene3D" id="3.30.70.2390">
    <property type="match status" value="1"/>
</dbReference>
<dbReference type="InterPro" id="IPR027381">
    <property type="entry name" value="LytR/CpsA/Psr_C"/>
</dbReference>
<dbReference type="Pfam" id="PF13399">
    <property type="entry name" value="LytR_C"/>
    <property type="match status" value="1"/>
</dbReference>
<evidence type="ECO:0000269" key="1">
    <source>
    </source>
</evidence>
<evidence type="ECO:0000269" key="2">
    <source>
    </source>
</evidence>
<evidence type="ECO:0000269" key="3">
    <source>
    </source>
</evidence>
<evidence type="ECO:0000269" key="4">
    <source>
    </source>
</evidence>
<evidence type="ECO:0000303" key="5">
    <source>
    </source>
</evidence>
<evidence type="ECO:0000312" key="6">
    <source>
        <dbReference type="EMBL" id="CCP43162.1"/>
    </source>
</evidence>